<protein>
    <recommendedName>
        <fullName>RNA-directed RNA polymerase L</fullName>
        <shortName>Protein L</shortName>
    </recommendedName>
    <alternativeName>
        <fullName>Large structural protein</fullName>
    </alternativeName>
    <alternativeName>
        <fullName>Replicase</fullName>
    </alternativeName>
    <alternativeName>
        <fullName>Transcriptase</fullName>
    </alternativeName>
    <domain>
        <recommendedName>
            <fullName>RNA-directed RNA polymerase</fullName>
            <ecNumber evidence="3">2.7.7.48</ecNumber>
        </recommendedName>
    </domain>
    <domain>
        <recommendedName>
            <fullName evidence="2">GTP phosphohydrolase</fullName>
            <ecNumber evidence="2">3.6.1.-</ecNumber>
        </recommendedName>
    </domain>
    <domain>
        <recommendedName>
            <fullName evidence="6">GDP polyribonucleotidyltransferase</fullName>
            <ecNumber evidence="2">2.7.7.88</ecNumber>
        </recommendedName>
        <alternativeName>
            <fullName evidence="6">PRNTase</fullName>
        </alternativeName>
    </domain>
    <domain>
        <recommendedName>
            <fullName evidence="6">mRNA cap methyltransferase</fullName>
            <ecNumber evidence="2">2.1.1.375</ecNumber>
        </recommendedName>
        <alternativeName>
            <fullName evidence="2">mRNA (guanine-N(7)-)-methyltransferase</fullName>
            <shortName evidence="2">G-N7-MTase</shortName>
        </alternativeName>
        <alternativeName>
            <fullName evidence="2">mRNA (nucleoside-2'-O-)-methyltransferase</fullName>
            <shortName evidence="2">N1-2'-O-MTase</shortName>
        </alternativeName>
    </domain>
</protein>
<comment type="function">
    <text evidence="1">Displays RNA-directed RNA polymerase, mRNA guanylyl transferase, mRNA (guanine-N(7)-)-methyltransferase and poly(A) synthetase activities. The viral mRNA guanylyl transferase displays a different biochemical reaction than the cellular enzyme. The template is composed of the viral RNA tightly encapsidated by the nucleoprotein (N). Functions either as transcriptase or as replicase. The transcriptase synthesizes subsequently subgenomic RNAs, assuring their capping and polyadenylation by a stuttering mechanism (By similarity).</text>
</comment>
<comment type="catalytic activity">
    <reaction evidence="4">
        <text>RNA(n) + a ribonucleoside 5'-triphosphate = RNA(n+1) + diphosphate</text>
        <dbReference type="Rhea" id="RHEA:21248"/>
        <dbReference type="Rhea" id="RHEA-COMP:14527"/>
        <dbReference type="Rhea" id="RHEA-COMP:17342"/>
        <dbReference type="ChEBI" id="CHEBI:33019"/>
        <dbReference type="ChEBI" id="CHEBI:61557"/>
        <dbReference type="ChEBI" id="CHEBI:140395"/>
        <dbReference type="EC" id="2.7.7.48"/>
    </reaction>
</comment>
<comment type="catalytic activity">
    <reaction evidence="2">
        <text>a 5'-end (5'-triphosphoguanosine)-adenylyl-adenylyl-cytidylyl-adenosine in mRNA + 2 S-adenosyl-L-methionine = a 5'-end (N(7)-methyl 5'-triphosphoguanosine)-(2'-O-methyladenylyl)-adenylyl-cytidylyl-adenosine in mRNA + 2 S-adenosyl-L-homocysteine + H(+)</text>
        <dbReference type="Rhea" id="RHEA:65376"/>
        <dbReference type="Rhea" id="RHEA-COMP:16797"/>
        <dbReference type="Rhea" id="RHEA-COMP:16798"/>
        <dbReference type="ChEBI" id="CHEBI:15378"/>
        <dbReference type="ChEBI" id="CHEBI:57856"/>
        <dbReference type="ChEBI" id="CHEBI:59789"/>
        <dbReference type="ChEBI" id="CHEBI:156483"/>
        <dbReference type="ChEBI" id="CHEBI:156484"/>
        <dbReference type="EC" id="2.1.1.375"/>
    </reaction>
</comment>
<comment type="catalytic activity">
    <reaction evidence="2">
        <text>a 5'-end (5'-triphosphoguanosine)-adenylyl-adenylyl-cytidylyl-adenosine in mRNA + S-adenosyl-L-methionine = a 5'-end (5'-triphosphoguanosine)-(2'-O-methyladenylyl)-adenylyl-cytidylyl-adenosine in mRNA + S-adenosyl-L-homocysteine + H(+)</text>
        <dbReference type="Rhea" id="RHEA:65380"/>
        <dbReference type="Rhea" id="RHEA-COMP:16797"/>
        <dbReference type="Rhea" id="RHEA-COMP:16801"/>
        <dbReference type="ChEBI" id="CHEBI:15378"/>
        <dbReference type="ChEBI" id="CHEBI:57856"/>
        <dbReference type="ChEBI" id="CHEBI:59789"/>
        <dbReference type="ChEBI" id="CHEBI:156482"/>
        <dbReference type="ChEBI" id="CHEBI:156484"/>
    </reaction>
</comment>
<comment type="catalytic activity">
    <reaction evidence="3">
        <text>GTP + H2O = GDP + phosphate + H(+)</text>
        <dbReference type="Rhea" id="RHEA:19669"/>
        <dbReference type="ChEBI" id="CHEBI:15377"/>
        <dbReference type="ChEBI" id="CHEBI:15378"/>
        <dbReference type="ChEBI" id="CHEBI:37565"/>
        <dbReference type="ChEBI" id="CHEBI:43474"/>
        <dbReference type="ChEBI" id="CHEBI:58189"/>
    </reaction>
</comment>
<comment type="catalytic activity">
    <reaction evidence="2">
        <text>a 5'-end (5'-triphosphoguanosine)-(2'-O-methyladenylyl)-adenylyl-cytidylyl-adenosine in mRNA + S-adenosyl-L-methionine = a 5'-end (N(7)-methyl 5'-triphosphoguanosine)-(2'-O-methyladenylyl)-adenylyl-cytidylyl-adenosine in mRNA + S-adenosyl-L-homocysteine</text>
        <dbReference type="Rhea" id="RHEA:65440"/>
        <dbReference type="Rhea" id="RHEA-COMP:16798"/>
        <dbReference type="Rhea" id="RHEA-COMP:16801"/>
        <dbReference type="ChEBI" id="CHEBI:57856"/>
        <dbReference type="ChEBI" id="CHEBI:59789"/>
        <dbReference type="ChEBI" id="CHEBI:156482"/>
        <dbReference type="ChEBI" id="CHEBI:156483"/>
    </reaction>
</comment>
<comment type="catalytic activity">
    <reaction evidence="2">
        <text>a 5'-end triphospho-adenylyl-adenylyl-cytidylyl-adenosine in mRNA + GDP + H(+) = a 5'-end (5'-triphosphoguanosine)-adenylyl-adenylyl-cytidylyl-adenosine in mRNA + diphosphate</text>
        <dbReference type="Rhea" id="RHEA:65436"/>
        <dbReference type="Rhea" id="RHEA-COMP:16797"/>
        <dbReference type="Rhea" id="RHEA-COMP:16799"/>
        <dbReference type="ChEBI" id="CHEBI:15378"/>
        <dbReference type="ChEBI" id="CHEBI:33019"/>
        <dbReference type="ChEBI" id="CHEBI:58189"/>
        <dbReference type="ChEBI" id="CHEBI:156484"/>
        <dbReference type="ChEBI" id="CHEBI:156503"/>
        <dbReference type="EC" id="2.7.7.88"/>
    </reaction>
</comment>
<comment type="subcellular location">
    <subcellularLocation>
        <location evidence="6">Virion</location>
    </subcellularLocation>
    <subcellularLocation>
        <location evidence="1">Host cytoplasm</location>
    </subcellularLocation>
</comment>
<comment type="similarity">
    <text evidence="6">Belongs to the varicosavirus protein L family.</text>
</comment>
<sequence>MSLASRMTSVGGADNYGESDYGWDETVLGDMHLNSAINLDLFKEFLHIDPPVYKVKENHRLTEELRELQSLARKGSKIEIGFQRLFARMFPRDGNLIPMDSTMTRMIMKIIRDSGTKYKLGIPLLGISEEMIKKGAMVPSNLVYSFNCFLNIIYGRSEWIRSEGIAIRFKMYEHGRFIRRDLTISEKEYNFIVGKEVVEIRASRRKERFIADYNSLLLLLDVAGQRICAHLCSQLGEISGVPGSLSRYHLETLCTAGDRMIERCGNKAYEVLGMYEALCVGRLLENNPDGITDHTQFSANCEEELQELIAGSVEPAFMKSQVDLIKTTLEKMKNQDISNAFCLYRVWGHPTVDIYEGMKKVHTIGTKVKVIPPNLGTIMVCQFRKMFMSTFFKKHHRYPPITGTPGEYLERCLKDNVAIRIEHLAYNLRDFEFIRIGETYSVPDTFDMCHVLNDKAVSPDMSELLESIKNGKGTSCGAKRRGMLRWMEGDSLNCKSFLSDIDEKGLSEEDLLIGMYEKEREIKVAARMYSLMTERMRYYFVLTEGLIADYILPHFPEITMKDSLNVLLKKMWESGGQRSIGSMDVNINIDFSKWNTNMREGPTSDTFREMDGIFGFKRLIARTHEIFNASLVYSASGKYLPTIEDGRILDDPPMCYRGHLGGFEGLRQKGWTVATVCLLAYLSEQNKIQMKLMGQGDNQIIRLRMPTSYWDSLRLTEEMKKKEARILSDKFVHEMDIIFTGVGLPIKVRETWKSTRLFMYGKVMLLDGRQLPQWYKKTLRSYALSNEGTLTISGVIGTIATNMCAAGGGSEVPCVMYLFFLLLAEWSLEFMFRYHPFTRVGIKDGSSMEFRLNEKGGYVHKQTRKTNNLWLKSLLVLVPTAVGGSVTIPLTGFIMRGFPDKASEGYAWLKFLGSSKSPIQGFLKNFYTFLPNDTVEADMLVQSPFSLNHKRPPTPGLQTKENIREWLLSTPRFQQNRFIRSMQVLLSGFDKKSVCRELLTERMNPLISHEVYETFGHVYCEGIVARVENTRTIRTLHLSREDRKPIVAKLMTDEMAYIAYMWWRGNTKGEVFEECATKQARKGRNVGWKREIMGITTPHPLEVLFQSVCRPGDQCQRSDDYITSKLVDDGKFPPFLGSKIKNKVYSLQDEEARREPLIKTGARLARQFNWIGMGENMRGLVLKNVGSICDVSVFDKFVDDDPSDNLYTGSLMHRFTPSSVSEGCFINYAPQVGHKVFMSSDTLPSLSRGQTNYTFHFQAMYCFLQYSISKSGNEGSYHHHIMCQDCVVPVEDEFDDIPNETPSIVKAQEEQYVSIIRTTLGYIHTKPRSAMVLEDKSPIGRYIEDVEGHEKELYSGVVELLCWKSALEILGRTRDTHATVGTEDLQGWPRIYAYKVSRRHIIGKVTSFILYILAVQIGELPLPYSMERVSRRAIDVVSRVGLEGFSAVASLCLGRDIPMVNDVVTIVDGFAYPETVSVCLRSIKASILMTIGKVIRVDGFMSRRSVYPTESMTSDDFLRILGFKAVIFYGCTKIHEKCQLKGLDQVTYAEMMCHHRCLEKLLSSNLLTHMTMDRAMKYLPIKITKILPKISSTRPNTIAVTREVETENREFSDTFPIDERVTYPEMDLKTNQMIQYPTSSIYKWSDILLGIEHYDHVVVMGDGTGGTSMVAAHMFPNSTIYPMALLESKNLIPQDMESLAPPMSRKLTNVDSSLLIDLPDDIRKPTFRTRMLERVSLMRGNILIISDIEGTGTLFRDIVSTCLYMPTSTDVLMKTHLADLCGSYYMMKGAGRIRLRGSRLANLRYGEVFVSFRVTGGNIRPNRRGLGNCIQEVMIGLMNTQIETATGMLSQIESMFPLAADMSMNIAMMKMASWGGSFSRKVLGEDGLKLMGYVYQYINTHYHFASSSYRPGDNRTVTPRRKEDLTKLLCSIMLGVYGEDTETIEEVSKYTLIGSKKGVPGKSYFKVLMWKTGTKRALEHDEYMVGRAIRNYRTRILEAKKLDGPIGLPFHSGSLRKIATWGYKIPISASGGWIDNHLQI</sequence>
<keyword id="KW-0067">ATP-binding</keyword>
<keyword id="KW-1035">Host cytoplasm</keyword>
<keyword id="KW-0378">Hydrolase</keyword>
<keyword id="KW-0489">Methyltransferase</keyword>
<keyword id="KW-0506">mRNA capping</keyword>
<keyword id="KW-0507">mRNA processing</keyword>
<keyword id="KW-0511">Multifunctional enzyme</keyword>
<keyword id="KW-0547">Nucleotide-binding</keyword>
<keyword id="KW-0548">Nucleotidyltransferase</keyword>
<keyword id="KW-1185">Reference proteome</keyword>
<keyword id="KW-0696">RNA-directed RNA polymerase</keyword>
<keyword id="KW-0949">S-adenosyl-L-methionine</keyword>
<keyword id="KW-0808">Transferase</keyword>
<keyword id="KW-0693">Viral RNA replication</keyword>
<keyword id="KW-0946">Virion</keyword>
<accession>Q8B0U2</accession>
<reference key="1">
    <citation type="journal article" date="2002" name="Virology">
        <title>The nucleotide sequence of RNA1 of Lettuce big-vein virus, genus Varicosavirus, reveals its relation to nonsegmented negative-strand RNA viruses.</title>
        <authorList>
            <person name="Sasaya T."/>
            <person name="Ishikawa K."/>
            <person name="Koganezawa H."/>
        </authorList>
    </citation>
    <scope>NUCLEOTIDE SEQUENCE [GENOMIC RNA]</scope>
</reference>
<gene>
    <name type="primary">L</name>
</gene>
<organismHost>
    <name type="scientific">Lactuca sativa</name>
    <name type="common">Garden lettuce</name>
    <dbReference type="NCBI Taxonomy" id="4236"/>
</organismHost>
<organismHost>
    <name type="scientific">Sonchus asper</name>
    <name type="common">Spiny sowthistle</name>
    <name type="synonym">Sonchus oleraceus var. asper</name>
    <dbReference type="NCBI Taxonomy" id="50193"/>
</organismHost>
<organismHost>
    <name type="scientific">Sonchus oleraceus</name>
    <name type="common">Common sowthistle</name>
    <dbReference type="NCBI Taxonomy" id="50207"/>
</organismHost>
<evidence type="ECO:0000250" key="1"/>
<evidence type="ECO:0000250" key="2">
    <source>
        <dbReference type="UniProtKB" id="P03523"/>
    </source>
</evidence>
<evidence type="ECO:0000250" key="3">
    <source>
        <dbReference type="UniProtKB" id="P28887"/>
    </source>
</evidence>
<evidence type="ECO:0000255" key="4">
    <source>
        <dbReference type="PROSITE-ProRule" id="PRU00539"/>
    </source>
</evidence>
<evidence type="ECO:0000255" key="5">
    <source>
        <dbReference type="PROSITE-ProRule" id="PRU00923"/>
    </source>
</evidence>
<evidence type="ECO:0000305" key="6"/>
<name>L_LBVAV</name>
<proteinExistence type="inferred from homology"/>
<organism>
    <name type="scientific">Lettuce big-vein associated virus (isolate Japan/Kagawa)</name>
    <name type="common">LBVaV</name>
    <dbReference type="NCBI Taxonomy" id="652962"/>
    <lineage>
        <taxon>Viruses</taxon>
        <taxon>Riboviria</taxon>
        <taxon>Orthornavirae</taxon>
        <taxon>Negarnaviricota</taxon>
        <taxon>Haploviricotina</taxon>
        <taxon>Monjiviricetes</taxon>
        <taxon>Mononegavirales</taxon>
        <taxon>Rhabdoviridae</taxon>
        <taxon>Betarhabdovirinae</taxon>
        <taxon>Varicosavirus</taxon>
        <taxon>Varicosavirus lactucae</taxon>
    </lineage>
</organism>
<dbReference type="EC" id="2.7.7.48" evidence="3"/>
<dbReference type="EC" id="3.6.1.-" evidence="2"/>
<dbReference type="EC" id="2.7.7.88" evidence="2"/>
<dbReference type="EC" id="2.1.1.375" evidence="2"/>
<dbReference type="EMBL" id="AB075039">
    <property type="protein sequence ID" value="BAC16226.1"/>
    <property type="molecule type" value="Genomic_RNA"/>
</dbReference>
<dbReference type="SMR" id="Q8B0U2"/>
<dbReference type="KEGG" id="vg:7040199"/>
<dbReference type="Proteomes" id="UP000008154">
    <property type="component" value="Genome"/>
</dbReference>
<dbReference type="GO" id="GO:0030430">
    <property type="term" value="C:host cell cytoplasm"/>
    <property type="evidence" value="ECO:0007669"/>
    <property type="project" value="UniProtKB-SubCell"/>
</dbReference>
<dbReference type="GO" id="GO:0044423">
    <property type="term" value="C:virion component"/>
    <property type="evidence" value="ECO:0007669"/>
    <property type="project" value="UniProtKB-KW"/>
</dbReference>
<dbReference type="GO" id="GO:0005524">
    <property type="term" value="F:ATP binding"/>
    <property type="evidence" value="ECO:0007669"/>
    <property type="project" value="UniProtKB-KW"/>
</dbReference>
<dbReference type="GO" id="GO:0003924">
    <property type="term" value="F:GTPase activity"/>
    <property type="evidence" value="ECO:0007669"/>
    <property type="project" value="RHEA"/>
</dbReference>
<dbReference type="GO" id="GO:0004482">
    <property type="term" value="F:mRNA 5'-cap (guanine-N7-)-methyltransferase activity"/>
    <property type="evidence" value="ECO:0007669"/>
    <property type="project" value="InterPro"/>
</dbReference>
<dbReference type="GO" id="GO:0003968">
    <property type="term" value="F:RNA-directed RNA polymerase activity"/>
    <property type="evidence" value="ECO:0007669"/>
    <property type="project" value="UniProtKB-KW"/>
</dbReference>
<dbReference type="InterPro" id="IPR039736">
    <property type="entry name" value="L_poly_C"/>
</dbReference>
<dbReference type="InterPro" id="IPR026890">
    <property type="entry name" value="Mononeg_mRNAcap"/>
</dbReference>
<dbReference type="InterPro" id="IPR014023">
    <property type="entry name" value="Mononeg_RNA_pol_cat"/>
</dbReference>
<dbReference type="InterPro" id="IPR025786">
    <property type="entry name" value="Mononega_L_MeTrfase"/>
</dbReference>
<dbReference type="NCBIfam" id="TIGR04198">
    <property type="entry name" value="paramyx_RNAcap"/>
    <property type="match status" value="1"/>
</dbReference>
<dbReference type="Pfam" id="PF14318">
    <property type="entry name" value="Mononeg_mRNAcap"/>
    <property type="match status" value="1"/>
</dbReference>
<dbReference type="Pfam" id="PF00946">
    <property type="entry name" value="Mononeg_RNA_pol"/>
    <property type="match status" value="1"/>
</dbReference>
<dbReference type="PROSITE" id="PS50526">
    <property type="entry name" value="RDRP_SSRNA_NEG_NONSEG"/>
    <property type="match status" value="1"/>
</dbReference>
<dbReference type="PROSITE" id="PS51590">
    <property type="entry name" value="SAM_MT_MNV_L"/>
    <property type="match status" value="1"/>
</dbReference>
<feature type="chain" id="PRO_0000391473" description="RNA-directed RNA polymerase L">
    <location>
        <begin position="1"/>
        <end position="2040"/>
    </location>
</feature>
<feature type="domain" description="RdRp catalytic" evidence="4">
    <location>
        <begin position="583"/>
        <end position="768"/>
    </location>
</feature>
<feature type="domain" description="Mononegavirus-type SAM-dependent 2'-O-MTase" evidence="5">
    <location>
        <begin position="1632"/>
        <end position="1811"/>
    </location>
</feature>